<sequence length="1053" mass="116605">MGIFNGLPVPSDKTYLREELARIDESWAAARFDSLPHVVHILTSKDREADIHILKEQSDVVEEVVDEVVHAYHGGFNKAIQNYSQILRLFSESTEKIGDLKHDLAEAKQSLGARNKQLHQLWYRSVTLRHIISLLDQIEGIAKVPSRIEKLIADKQFYAAIQVYLQSSLMLEREGLQTVGALQDVRSELTKLRGALFFKILDDLHAHLYNRGEYSSVASSIYERDDEVPTTTAVAASRMSSQPLSRRTRTLKGDSQFGVRGLTNGSYRTASNDESSSFDGHDEEDSVEHDESTADTARNGTDSKLLSHQLPPWLSDSTPDEFIEAVRKSDDPLHVKYLQTLVQCLCMLGKVAAAGAIICQKLRPTIHEIIISKIKAHLETTNLSKSACSQGDRSVAAGLHLIKGQSEAYRLSKEKPQNGISNSGTHLAVSPVSPLMAPGGKAQAAAKELLDSILDTIVKIFENHVVIGELLEMKASQHDINTPRSLPTDVNWNTESEASQATGGYTISFPLTVLQSECQQLICEILRATPEAASADAAAQTAKLAKKAPKKDKRDAPEDGLTFTFRFTDATVSISNQGADLIRQGWGKRAPNASLEGYGSAAVLPEQGIYLAASIYRPVLQFTDKITSMLPKKHSQLVNDGLLTFTENFVKDHLLPTMFVDYRKGVQQAISSAAAFRPRAHTTTYTATVEKGRPILQGLLAIDLLAKEVLGWAQAMPKFATDLVKYVQTFLERTFERCRTSYMEAVLEKLSYMLIGRHDIEKLMRLDAASACLPSTLGHAVSHSEAVGTEVELSDLFLSLRPIKQDNLIRDDNKLILLASLSDSLEYVADSIERLGQAVPRVASQAEGNSRNQAASPRNLASFADEYRKLATDCLKVLRVEMQLETVFHLQEMTNREYLEDEDAEEPDDFVISLTSQITRREEGMAPFISGEKRNYVFGGISGIAANASIKALADMRSINLFGVQQICRNTIAVEQAMAAIPYIDGETVQQNLDRVRTYFELLNMPFEALLAFIAEHDQMFTPTEYSNLLKVNVPGRDTPSDAQSRLLEILSH</sequence>
<name>SEC8_ARATH</name>
<feature type="chain" id="PRO_0000118939" description="Exocyst complex component SEC8">
    <location>
        <begin position="1"/>
        <end position="1053"/>
    </location>
</feature>
<feature type="region of interest" description="Disordered" evidence="2">
    <location>
        <begin position="255"/>
        <end position="308"/>
    </location>
</feature>
<feature type="coiled-coil region" evidence="1">
    <location>
        <begin position="91"/>
        <end position="121"/>
    </location>
</feature>
<feature type="compositionally biased region" description="Polar residues" evidence="2">
    <location>
        <begin position="263"/>
        <end position="278"/>
    </location>
</feature>
<feature type="compositionally biased region" description="Polar residues" evidence="2">
    <location>
        <begin position="294"/>
        <end position="306"/>
    </location>
</feature>
<reference key="1">
    <citation type="journal article" date="2000" name="Nature">
        <title>Sequence and analysis of chromosome 3 of the plant Arabidopsis thaliana.</title>
        <authorList>
            <person name="Salanoubat M."/>
            <person name="Lemcke K."/>
            <person name="Rieger M."/>
            <person name="Ansorge W."/>
            <person name="Unseld M."/>
            <person name="Fartmann B."/>
            <person name="Valle G."/>
            <person name="Bloecker H."/>
            <person name="Perez-Alonso M."/>
            <person name="Obermaier B."/>
            <person name="Delseny M."/>
            <person name="Boutry M."/>
            <person name="Grivell L.A."/>
            <person name="Mache R."/>
            <person name="Puigdomenech P."/>
            <person name="De Simone V."/>
            <person name="Choisne N."/>
            <person name="Artiguenave F."/>
            <person name="Robert C."/>
            <person name="Brottier P."/>
            <person name="Wincker P."/>
            <person name="Cattolico L."/>
            <person name="Weissenbach J."/>
            <person name="Saurin W."/>
            <person name="Quetier F."/>
            <person name="Schaefer M."/>
            <person name="Mueller-Auer S."/>
            <person name="Gabel C."/>
            <person name="Fuchs M."/>
            <person name="Benes V."/>
            <person name="Wurmbach E."/>
            <person name="Drzonek H."/>
            <person name="Erfle H."/>
            <person name="Jordan N."/>
            <person name="Bangert S."/>
            <person name="Wiedelmann R."/>
            <person name="Kranz H."/>
            <person name="Voss H."/>
            <person name="Holland R."/>
            <person name="Brandt P."/>
            <person name="Nyakatura G."/>
            <person name="Vezzi A."/>
            <person name="D'Angelo M."/>
            <person name="Pallavicini A."/>
            <person name="Toppo S."/>
            <person name="Simionati B."/>
            <person name="Conrad A."/>
            <person name="Hornischer K."/>
            <person name="Kauer G."/>
            <person name="Loehnert T.-H."/>
            <person name="Nordsiek G."/>
            <person name="Reichelt J."/>
            <person name="Scharfe M."/>
            <person name="Schoen O."/>
            <person name="Bargues M."/>
            <person name="Terol J."/>
            <person name="Climent J."/>
            <person name="Navarro P."/>
            <person name="Collado C."/>
            <person name="Perez-Perez A."/>
            <person name="Ottenwaelder B."/>
            <person name="Duchemin D."/>
            <person name="Cooke R."/>
            <person name="Laudie M."/>
            <person name="Berger-Llauro C."/>
            <person name="Purnelle B."/>
            <person name="Masuy D."/>
            <person name="de Haan M."/>
            <person name="Maarse A.C."/>
            <person name="Alcaraz J.-P."/>
            <person name="Cottet A."/>
            <person name="Casacuberta E."/>
            <person name="Monfort A."/>
            <person name="Argiriou A."/>
            <person name="Flores M."/>
            <person name="Liguori R."/>
            <person name="Vitale D."/>
            <person name="Mannhaupt G."/>
            <person name="Haase D."/>
            <person name="Schoof H."/>
            <person name="Rudd S."/>
            <person name="Zaccaria P."/>
            <person name="Mewes H.-W."/>
            <person name="Mayer K.F.X."/>
            <person name="Kaul S."/>
            <person name="Town C.D."/>
            <person name="Koo H.L."/>
            <person name="Tallon L.J."/>
            <person name="Jenkins J."/>
            <person name="Rooney T."/>
            <person name="Rizzo M."/>
            <person name="Walts A."/>
            <person name="Utterback T."/>
            <person name="Fujii C.Y."/>
            <person name="Shea T.P."/>
            <person name="Creasy T.H."/>
            <person name="Haas B."/>
            <person name="Maiti R."/>
            <person name="Wu D."/>
            <person name="Peterson J."/>
            <person name="Van Aken S."/>
            <person name="Pai G."/>
            <person name="Militscher J."/>
            <person name="Sellers P."/>
            <person name="Gill J.E."/>
            <person name="Feldblyum T.V."/>
            <person name="Preuss D."/>
            <person name="Lin X."/>
            <person name="Nierman W.C."/>
            <person name="Salzberg S.L."/>
            <person name="White O."/>
            <person name="Venter J.C."/>
            <person name="Fraser C.M."/>
            <person name="Kaneko T."/>
            <person name="Nakamura Y."/>
            <person name="Sato S."/>
            <person name="Kato T."/>
            <person name="Asamizu E."/>
            <person name="Sasamoto S."/>
            <person name="Kimura T."/>
            <person name="Idesawa K."/>
            <person name="Kawashima K."/>
            <person name="Kishida Y."/>
            <person name="Kiyokawa C."/>
            <person name="Kohara M."/>
            <person name="Matsumoto M."/>
            <person name="Matsuno A."/>
            <person name="Muraki A."/>
            <person name="Nakayama S."/>
            <person name="Nakazaki N."/>
            <person name="Shinpo S."/>
            <person name="Takeuchi C."/>
            <person name="Wada T."/>
            <person name="Watanabe A."/>
            <person name="Yamada M."/>
            <person name="Yasuda M."/>
            <person name="Tabata S."/>
        </authorList>
    </citation>
    <scope>NUCLEOTIDE SEQUENCE [LARGE SCALE GENOMIC DNA]</scope>
    <source>
        <strain>cv. Columbia</strain>
    </source>
</reference>
<reference key="2">
    <citation type="journal article" date="2017" name="Plant J.">
        <title>Araport11: a complete reannotation of the Arabidopsis thaliana reference genome.</title>
        <authorList>
            <person name="Cheng C.Y."/>
            <person name="Krishnakumar V."/>
            <person name="Chan A.P."/>
            <person name="Thibaud-Nissen F."/>
            <person name="Schobel S."/>
            <person name="Town C.D."/>
        </authorList>
    </citation>
    <scope>GENOME REANNOTATION</scope>
    <source>
        <strain>cv. Columbia</strain>
    </source>
</reference>
<reference key="3">
    <citation type="journal article" date="2002" name="Science">
        <title>Functional annotation of a full-length Arabidopsis cDNA collection.</title>
        <authorList>
            <person name="Seki M."/>
            <person name="Narusaka M."/>
            <person name="Kamiya A."/>
            <person name="Ishida J."/>
            <person name="Satou M."/>
            <person name="Sakurai T."/>
            <person name="Nakajima M."/>
            <person name="Enju A."/>
            <person name="Akiyama K."/>
            <person name="Oono Y."/>
            <person name="Muramatsu M."/>
            <person name="Hayashizaki Y."/>
            <person name="Kawai J."/>
            <person name="Carninci P."/>
            <person name="Itoh M."/>
            <person name="Ishii Y."/>
            <person name="Arakawa T."/>
            <person name="Shibata K."/>
            <person name="Shinagawa A."/>
            <person name="Shinozaki K."/>
        </authorList>
    </citation>
    <scope>NUCLEOTIDE SEQUENCE [LARGE SCALE MRNA]</scope>
    <source>
        <strain>cv. Columbia</strain>
    </source>
</reference>
<reference key="4">
    <citation type="journal article" date="2003" name="Science">
        <title>Empirical analysis of transcriptional activity in the Arabidopsis genome.</title>
        <authorList>
            <person name="Yamada K."/>
            <person name="Lim J."/>
            <person name="Dale J.M."/>
            <person name="Chen H."/>
            <person name="Shinn P."/>
            <person name="Palm C.J."/>
            <person name="Southwick A.M."/>
            <person name="Wu H.C."/>
            <person name="Kim C.J."/>
            <person name="Nguyen M."/>
            <person name="Pham P.K."/>
            <person name="Cheuk R.F."/>
            <person name="Karlin-Newmann G."/>
            <person name="Liu S.X."/>
            <person name="Lam B."/>
            <person name="Sakano H."/>
            <person name="Wu T."/>
            <person name="Yu G."/>
            <person name="Miranda M."/>
            <person name="Quach H.L."/>
            <person name="Tripp M."/>
            <person name="Chang C.H."/>
            <person name="Lee J.M."/>
            <person name="Toriumi M.J."/>
            <person name="Chan M.M."/>
            <person name="Tang C.C."/>
            <person name="Onodera C.S."/>
            <person name="Deng J.M."/>
            <person name="Akiyama K."/>
            <person name="Ansari Y."/>
            <person name="Arakawa T."/>
            <person name="Banh J."/>
            <person name="Banno F."/>
            <person name="Bowser L."/>
            <person name="Brooks S.Y."/>
            <person name="Carninci P."/>
            <person name="Chao Q."/>
            <person name="Choy N."/>
            <person name="Enju A."/>
            <person name="Goldsmith A.D."/>
            <person name="Gurjal M."/>
            <person name="Hansen N.F."/>
            <person name="Hayashizaki Y."/>
            <person name="Johnson-Hopson C."/>
            <person name="Hsuan V.W."/>
            <person name="Iida K."/>
            <person name="Karnes M."/>
            <person name="Khan S."/>
            <person name="Koesema E."/>
            <person name="Ishida J."/>
            <person name="Jiang P.X."/>
            <person name="Jones T."/>
            <person name="Kawai J."/>
            <person name="Kamiya A."/>
            <person name="Meyers C."/>
            <person name="Nakajima M."/>
            <person name="Narusaka M."/>
            <person name="Seki M."/>
            <person name="Sakurai T."/>
            <person name="Satou M."/>
            <person name="Tamse R."/>
            <person name="Vaysberg M."/>
            <person name="Wallender E.K."/>
            <person name="Wong C."/>
            <person name="Yamamura Y."/>
            <person name="Yuan S."/>
            <person name="Shinozaki K."/>
            <person name="Davis R.W."/>
            <person name="Theologis A."/>
            <person name="Ecker J.R."/>
        </authorList>
    </citation>
    <scope>NUCLEOTIDE SEQUENCE [LARGE SCALE MRNA]</scope>
    <source>
        <strain>cv. Columbia</strain>
    </source>
</reference>
<reference key="5">
    <citation type="journal article" date="2005" name="Plant Physiol.">
        <title>SEC8, a subunit of the putative Arabidopsis exocyst complex, facilitates pollen germination and competitive pollen tube growth.</title>
        <authorList>
            <person name="Cole R.A."/>
            <person name="Synek L."/>
            <person name="Zarsky V."/>
            <person name="Fowler J.E."/>
        </authorList>
    </citation>
    <scope>FUNCTION</scope>
    <scope>DISRUPTION PHENOTYPE</scope>
</reference>
<reference key="6">
    <citation type="journal article" date="2008" name="Plant Cell">
        <title>An exocyst complex functions in plant cell growth in Arabidopsis and tobacco.</title>
        <authorList>
            <person name="Hala M."/>
            <person name="Cole R."/>
            <person name="Synek L."/>
            <person name="Drdova E."/>
            <person name="Pecenkova T."/>
            <person name="Nordheim A."/>
            <person name="Lamkemeyer T."/>
            <person name="Madlung J."/>
            <person name="Hochholdinger F."/>
            <person name="Fowler J.E."/>
            <person name="Zarsky V."/>
        </authorList>
    </citation>
    <scope>COMPONENT OF THE EXOCYST COMPLEX</scope>
    <scope>DISRUPTION PHENOTYPE</scope>
</reference>
<reference key="7">
    <citation type="journal article" date="2009" name="Plant Physiol.">
        <title>Large-scale Arabidopsis phosphoproteome profiling reveals novel chloroplast kinase substrates and phosphorylation networks.</title>
        <authorList>
            <person name="Reiland S."/>
            <person name="Messerli G."/>
            <person name="Baerenfaller K."/>
            <person name="Gerrits B."/>
            <person name="Endler A."/>
            <person name="Grossmann J."/>
            <person name="Gruissem W."/>
            <person name="Baginsky S."/>
        </authorList>
    </citation>
    <scope>IDENTIFICATION BY MASS SPECTROMETRY [LARGE SCALE ANALYSIS]</scope>
</reference>
<reference key="8">
    <citation type="journal article" date="2010" name="New Phytol.">
        <title>Characterization of the Arabidopsis thaliana exocyst complex gene families by phylogenetic, expression profiling, and subcellular localization studies.</title>
        <authorList>
            <person name="Chong Y.T."/>
            <person name="Gidda S.K."/>
            <person name="Sanford C."/>
            <person name="Parkinson J."/>
            <person name="Mullen R.T."/>
            <person name="Goring D.R."/>
        </authorList>
    </citation>
    <scope>GENE FAMILY</scope>
    <scope>NOMENCLATURE</scope>
    <scope>SUBCELLULAR LOCATION</scope>
</reference>
<reference key="9">
    <citation type="journal article" date="2010" name="New Phytol.">
        <title>Arabidopsis exocyst subunits SEC8 and EXO70A1 and exocyst interactor ROH1 are involved in the localized deposition of seed coat pectin.</title>
        <authorList>
            <person name="Kulich I."/>
            <person name="Cole R."/>
            <person name="Drdova E."/>
            <person name="Cvrckova F."/>
            <person name="Soukup A."/>
            <person name="Fowler J."/>
            <person name="Zarsky V."/>
        </authorList>
    </citation>
    <scope>FUNCTION</scope>
</reference>
<reference key="10">
    <citation type="journal article" date="2010" name="Plant Cell">
        <title>The Arabidopsis exocyst complex is involved in cytokinesis and cell plate maturation.</title>
        <authorList>
            <person name="Fendrych M."/>
            <person name="Synek L."/>
            <person name="Pecenkova T."/>
            <person name="Toupalova H."/>
            <person name="Cole R."/>
            <person name="Drdova E."/>
            <person name="Nebesarova J."/>
            <person name="Sedinova M."/>
            <person name="Hala M."/>
            <person name="Fowler J.E."/>
            <person name="Zarsky V."/>
        </authorList>
    </citation>
    <scope>FUNCTION</scope>
    <scope>SUBCELLULAR LOCATION</scope>
</reference>
<reference key="11">
    <citation type="journal article" date="2014" name="Mol. Biol. Cell">
        <title>Exo70E2 is essential for exocyst subunit recruitment and EXPO formation in both plants and animals.</title>
        <authorList>
            <person name="Ding Y."/>
            <person name="Wang J."/>
            <person name="Chun Lai J.H."/>
            <person name="Ling Chan V.H."/>
            <person name="Wang X."/>
            <person name="Cai Y."/>
            <person name="Tan X."/>
            <person name="Bao Y."/>
            <person name="Xia J."/>
            <person name="Robinson D.G."/>
            <person name="Jiang L."/>
        </authorList>
    </citation>
    <scope>SUBCELLULAR LOCATION</scope>
    <source>
        <strain>cv. Columbia</strain>
    </source>
</reference>
<keyword id="KW-0134">Cell wall</keyword>
<keyword id="KW-0175">Coiled coil</keyword>
<keyword id="KW-0963">Cytoplasm</keyword>
<keyword id="KW-0206">Cytoskeleton</keyword>
<keyword id="KW-0268">Exocytosis</keyword>
<keyword id="KW-1185">Reference proteome</keyword>
<keyword id="KW-0964">Secreted</keyword>
<keyword id="KW-0813">Transport</keyword>
<evidence type="ECO:0000255" key="1"/>
<evidence type="ECO:0000256" key="2">
    <source>
        <dbReference type="SAM" id="MobiDB-lite"/>
    </source>
</evidence>
<evidence type="ECO:0000269" key="3">
    <source>
    </source>
</evidence>
<evidence type="ECO:0000269" key="4">
    <source>
    </source>
</evidence>
<evidence type="ECO:0000269" key="5">
    <source>
    </source>
</evidence>
<evidence type="ECO:0000269" key="6">
    <source>
    </source>
</evidence>
<evidence type="ECO:0000269" key="7">
    <source>
    </source>
</evidence>
<evidence type="ECO:0000305" key="8"/>
<accession>Q93YU5</accession>
<accession>Q541W5</accession>
<accession>Q9SS49</accession>
<dbReference type="EMBL" id="AC009400">
    <property type="protein sequence ID" value="AAF02806.1"/>
    <property type="status" value="ALT_SEQ"/>
    <property type="molecule type" value="Genomic_DNA"/>
</dbReference>
<dbReference type="EMBL" id="CP002686">
    <property type="protein sequence ID" value="AEE74898.1"/>
    <property type="molecule type" value="Genomic_DNA"/>
</dbReference>
<dbReference type="EMBL" id="AK118541">
    <property type="protein sequence ID" value="BAC43144.1"/>
    <property type="molecule type" value="mRNA"/>
</dbReference>
<dbReference type="EMBL" id="AY059763">
    <property type="protein sequence ID" value="AAL24111.1"/>
    <property type="molecule type" value="mRNA"/>
</dbReference>
<dbReference type="RefSeq" id="NP_566372.1">
    <property type="nucleotide sequence ID" value="NM_111873.4"/>
</dbReference>
<dbReference type="SMR" id="Q93YU5"/>
<dbReference type="BioGRID" id="5535">
    <property type="interactions" value="7"/>
</dbReference>
<dbReference type="FunCoup" id="Q93YU5">
    <property type="interactions" value="4399"/>
</dbReference>
<dbReference type="IntAct" id="Q93YU5">
    <property type="interactions" value="2"/>
</dbReference>
<dbReference type="STRING" id="3702.Q93YU5"/>
<dbReference type="TCDB" id="1.F.2.1.3">
    <property type="family name" value="the octameric exocyst (exocyst) family"/>
</dbReference>
<dbReference type="iPTMnet" id="Q93YU5"/>
<dbReference type="PaxDb" id="3702-AT3G10380.1"/>
<dbReference type="ProteomicsDB" id="232779"/>
<dbReference type="EnsemblPlants" id="AT3G10380.1">
    <property type="protein sequence ID" value="AT3G10380.1"/>
    <property type="gene ID" value="AT3G10380"/>
</dbReference>
<dbReference type="GeneID" id="820201"/>
<dbReference type="Gramene" id="AT3G10380.1">
    <property type="protein sequence ID" value="AT3G10380.1"/>
    <property type="gene ID" value="AT3G10380"/>
</dbReference>
<dbReference type="KEGG" id="ath:AT3G10380"/>
<dbReference type="Araport" id="AT3G10380"/>
<dbReference type="TAIR" id="AT3G10380">
    <property type="gene designation" value="SEC8"/>
</dbReference>
<dbReference type="eggNOG" id="ENOG502QRJ3">
    <property type="taxonomic scope" value="Eukaryota"/>
</dbReference>
<dbReference type="HOGENOM" id="CLU_009514_0_0_1"/>
<dbReference type="InParanoid" id="Q93YU5"/>
<dbReference type="OMA" id="HMEVRCR"/>
<dbReference type="OrthoDB" id="272977at2759"/>
<dbReference type="PhylomeDB" id="Q93YU5"/>
<dbReference type="CD-CODE" id="4299E36E">
    <property type="entry name" value="Nucleolus"/>
</dbReference>
<dbReference type="PRO" id="PR:Q93YU5"/>
<dbReference type="Proteomes" id="UP000006548">
    <property type="component" value="Chromosome 3"/>
</dbReference>
<dbReference type="ExpressionAtlas" id="Q93YU5">
    <property type="expression patterns" value="baseline and differential"/>
</dbReference>
<dbReference type="GO" id="GO:0005856">
    <property type="term" value="C:cytoskeleton"/>
    <property type="evidence" value="ECO:0007669"/>
    <property type="project" value="UniProtKB-KW"/>
</dbReference>
<dbReference type="GO" id="GO:0005829">
    <property type="term" value="C:cytosol"/>
    <property type="evidence" value="ECO:0000314"/>
    <property type="project" value="UniProtKB"/>
</dbReference>
<dbReference type="GO" id="GO:0000145">
    <property type="term" value="C:exocyst"/>
    <property type="evidence" value="ECO:0000314"/>
    <property type="project" value="TAIR"/>
</dbReference>
<dbReference type="GO" id="GO:0070062">
    <property type="term" value="C:extracellular exosome"/>
    <property type="evidence" value="ECO:0000314"/>
    <property type="project" value="UniProtKB"/>
</dbReference>
<dbReference type="GO" id="GO:0009524">
    <property type="term" value="C:phragmoplast"/>
    <property type="evidence" value="ECO:0007669"/>
    <property type="project" value="UniProtKB-SubCell"/>
</dbReference>
<dbReference type="GO" id="GO:0005886">
    <property type="term" value="C:plasma membrane"/>
    <property type="evidence" value="ECO:0007005"/>
    <property type="project" value="TAIR"/>
</dbReference>
<dbReference type="GO" id="GO:0009506">
    <property type="term" value="C:plasmodesma"/>
    <property type="evidence" value="ECO:0007005"/>
    <property type="project" value="TAIR"/>
</dbReference>
<dbReference type="GO" id="GO:0060321">
    <property type="term" value="P:acceptance of pollen"/>
    <property type="evidence" value="ECO:0000315"/>
    <property type="project" value="TAIR"/>
</dbReference>
<dbReference type="GO" id="GO:0048354">
    <property type="term" value="P:mucilage biosynthetic process involved in seed coat development"/>
    <property type="evidence" value="ECO:0000315"/>
    <property type="project" value="TAIR"/>
</dbReference>
<dbReference type="GO" id="GO:0006904">
    <property type="term" value="P:vesicle docking involved in exocytosis"/>
    <property type="evidence" value="ECO:0007669"/>
    <property type="project" value="InterPro"/>
</dbReference>
<dbReference type="GO" id="GO:0090522">
    <property type="term" value="P:vesicle tethering involved in exocytosis"/>
    <property type="evidence" value="ECO:0007669"/>
    <property type="project" value="InterPro"/>
</dbReference>
<dbReference type="InterPro" id="IPR039682">
    <property type="entry name" value="Sec8/EXOC4"/>
</dbReference>
<dbReference type="InterPro" id="IPR007191">
    <property type="entry name" value="Sec8_exocyst_N"/>
</dbReference>
<dbReference type="PANTHER" id="PTHR14146">
    <property type="entry name" value="EXOCYST COMPLEX COMPONENT 4"/>
    <property type="match status" value="1"/>
</dbReference>
<dbReference type="PANTHER" id="PTHR14146:SF0">
    <property type="entry name" value="EXOCYST COMPLEX COMPONENT 4"/>
    <property type="match status" value="1"/>
</dbReference>
<dbReference type="Pfam" id="PF04048">
    <property type="entry name" value="Sec8_N"/>
    <property type="match status" value="1"/>
</dbReference>
<gene>
    <name type="primary">SEC8</name>
    <name type="ordered locus">At3g10380</name>
    <name type="ORF">F14P13.2</name>
</gene>
<protein>
    <recommendedName>
        <fullName>Exocyst complex component SEC8</fullName>
        <shortName>AtSec8</shortName>
    </recommendedName>
    <alternativeName>
        <fullName>Exocyst complex component 4</fullName>
    </alternativeName>
</protein>
<comment type="function">
    <text>Component of the exocyst complex involved in the docking of exocytic vesicles with fusion sites on the plasma membrane during regulated or polarized secretion. Involved in polarized cell growth and organ morphogenesis. During cytokinesis, involved in secretory processes during cell plate initiation, cell plate maturation and formation of new primary cell wall.</text>
</comment>
<comment type="function">
    <text>Participates in polarized pectin delivery required for the polarized development of the mucilage-producing volcano cells of the seed coat.</text>
</comment>
<comment type="subunit">
    <text>The exocyst complex is composed of SEC3, SEC5, SEC6, SEC8, SEC10, EXO70A1 and EXO84B.</text>
</comment>
<comment type="subcellular location">
    <subcellularLocation>
        <location evidence="5 7">Cytoplasm</location>
        <location evidence="5 7">Cytosol</location>
    </subcellularLocation>
    <subcellularLocation>
        <location evidence="6">Cytoplasm</location>
        <location evidence="6">Cytoskeleton</location>
        <location evidence="6">Phragmoplast</location>
    </subcellularLocation>
    <subcellularLocation>
        <location evidence="6">Secreted</location>
        <location evidence="6">Cell wall</location>
    </subcellularLocation>
    <subcellularLocation>
        <location evidence="7">Secreted</location>
        <location evidence="7">Extracellular exosome</location>
    </subcellularLocation>
    <text evidence="6 7">During cytokinesis, localizes to the nascent cell plate and later to the cell plate insertion site and along the post-cytokinetic wall (PubMed:20870962). Shuttles from the cytoplasm to the exocyst-positive organelle (EXPO) in the presence of EXO70E2 (PubMed:24307681).</text>
</comment>
<comment type="disruption phenotype">
    <text evidence="3 4">Male gametophytic lethal due to defect in pollen germination and pollen tube growth.</text>
</comment>
<comment type="similarity">
    <text evidence="8">Belongs to the SEC8 family.</text>
</comment>
<comment type="sequence caution" evidence="8">
    <conflict type="erroneous gene model prediction">
        <sequence resource="EMBL-CDS" id="AAF02806"/>
    </conflict>
</comment>
<proteinExistence type="evidence at protein level"/>
<organism>
    <name type="scientific">Arabidopsis thaliana</name>
    <name type="common">Mouse-ear cress</name>
    <dbReference type="NCBI Taxonomy" id="3702"/>
    <lineage>
        <taxon>Eukaryota</taxon>
        <taxon>Viridiplantae</taxon>
        <taxon>Streptophyta</taxon>
        <taxon>Embryophyta</taxon>
        <taxon>Tracheophyta</taxon>
        <taxon>Spermatophyta</taxon>
        <taxon>Magnoliopsida</taxon>
        <taxon>eudicotyledons</taxon>
        <taxon>Gunneridae</taxon>
        <taxon>Pentapetalae</taxon>
        <taxon>rosids</taxon>
        <taxon>malvids</taxon>
        <taxon>Brassicales</taxon>
        <taxon>Brassicaceae</taxon>
        <taxon>Camelineae</taxon>
        <taxon>Arabidopsis</taxon>
    </lineage>
</organism>